<accession>Q6MD02</accession>
<organism>
    <name type="scientific">Protochlamydia amoebophila (strain UWE25)</name>
    <dbReference type="NCBI Taxonomy" id="264201"/>
    <lineage>
        <taxon>Bacteria</taxon>
        <taxon>Pseudomonadati</taxon>
        <taxon>Chlamydiota</taxon>
        <taxon>Chlamydiia</taxon>
        <taxon>Parachlamydiales</taxon>
        <taxon>Parachlamydiaceae</taxon>
        <taxon>Candidatus Protochlamydia</taxon>
    </lineage>
</organism>
<dbReference type="EC" id="3.1.-.-" evidence="1"/>
<dbReference type="EMBL" id="BX908798">
    <property type="protein sequence ID" value="CAF23547.1"/>
    <property type="status" value="ALT_INIT"/>
    <property type="molecule type" value="Genomic_DNA"/>
</dbReference>
<dbReference type="RefSeq" id="WP_039357864.1">
    <property type="nucleotide sequence ID" value="NC_005861.2"/>
</dbReference>
<dbReference type="SMR" id="Q6MD02"/>
<dbReference type="STRING" id="264201.pc0823"/>
<dbReference type="eggNOG" id="COG0816">
    <property type="taxonomic scope" value="Bacteria"/>
</dbReference>
<dbReference type="HOGENOM" id="CLU_098240_2_0_0"/>
<dbReference type="OrthoDB" id="9796140at2"/>
<dbReference type="Proteomes" id="UP000000529">
    <property type="component" value="Chromosome"/>
</dbReference>
<dbReference type="GO" id="GO:0005829">
    <property type="term" value="C:cytosol"/>
    <property type="evidence" value="ECO:0007669"/>
    <property type="project" value="TreeGrafter"/>
</dbReference>
<dbReference type="GO" id="GO:0004518">
    <property type="term" value="F:nuclease activity"/>
    <property type="evidence" value="ECO:0007669"/>
    <property type="project" value="UniProtKB-KW"/>
</dbReference>
<dbReference type="GO" id="GO:0000967">
    <property type="term" value="P:rRNA 5'-end processing"/>
    <property type="evidence" value="ECO:0007669"/>
    <property type="project" value="UniProtKB-UniRule"/>
</dbReference>
<dbReference type="CDD" id="cd16964">
    <property type="entry name" value="YqgF"/>
    <property type="match status" value="1"/>
</dbReference>
<dbReference type="Gene3D" id="3.30.420.140">
    <property type="entry name" value="YqgF/RNase H-like domain"/>
    <property type="match status" value="1"/>
</dbReference>
<dbReference type="HAMAP" id="MF_00651">
    <property type="entry name" value="Nuclease_YqgF"/>
    <property type="match status" value="1"/>
</dbReference>
<dbReference type="InterPro" id="IPR012337">
    <property type="entry name" value="RNaseH-like_sf"/>
</dbReference>
<dbReference type="InterPro" id="IPR005227">
    <property type="entry name" value="YqgF"/>
</dbReference>
<dbReference type="InterPro" id="IPR006641">
    <property type="entry name" value="YqgF/RNaseH-like_dom"/>
</dbReference>
<dbReference type="InterPro" id="IPR037027">
    <property type="entry name" value="YqgF/RNaseH-like_dom_sf"/>
</dbReference>
<dbReference type="NCBIfam" id="TIGR00250">
    <property type="entry name" value="RNAse_H_YqgF"/>
    <property type="match status" value="1"/>
</dbReference>
<dbReference type="PANTHER" id="PTHR33317">
    <property type="entry name" value="POLYNUCLEOTIDYL TRANSFERASE, RIBONUCLEASE H-LIKE SUPERFAMILY PROTEIN"/>
    <property type="match status" value="1"/>
</dbReference>
<dbReference type="PANTHER" id="PTHR33317:SF4">
    <property type="entry name" value="POLYNUCLEOTIDYL TRANSFERASE, RIBONUCLEASE H-LIKE SUPERFAMILY PROTEIN"/>
    <property type="match status" value="1"/>
</dbReference>
<dbReference type="Pfam" id="PF03652">
    <property type="entry name" value="RuvX"/>
    <property type="match status" value="1"/>
</dbReference>
<dbReference type="SMART" id="SM00732">
    <property type="entry name" value="YqgFc"/>
    <property type="match status" value="1"/>
</dbReference>
<dbReference type="SUPFAM" id="SSF53098">
    <property type="entry name" value="Ribonuclease H-like"/>
    <property type="match status" value="1"/>
</dbReference>
<evidence type="ECO:0000255" key="1">
    <source>
        <dbReference type="HAMAP-Rule" id="MF_00651"/>
    </source>
</evidence>
<evidence type="ECO:0000305" key="2"/>
<sequence length="150" mass="17076">MENKPKPSRILGIDFGMSRIGLAQSDERKIIAMPLITVHTEKKSEQTVIKLLETISQLCETQKCEIEEIVIGLPLMMSGRTGFLADEVKHFAQLLQQLTPIPIRLWDERLTTVQAERSLRESQLTRKKRSKVVDIVSASIILQSYLDSRC</sequence>
<feature type="chain" id="PRO_0000172109" description="Putative pre-16S rRNA nuclease">
    <location>
        <begin position="1"/>
        <end position="150"/>
    </location>
</feature>
<gene>
    <name type="ordered locus">pc0823</name>
</gene>
<protein>
    <recommendedName>
        <fullName evidence="1">Putative pre-16S rRNA nuclease</fullName>
        <ecNumber evidence="1">3.1.-.-</ecNumber>
    </recommendedName>
</protein>
<keyword id="KW-0963">Cytoplasm</keyword>
<keyword id="KW-0378">Hydrolase</keyword>
<keyword id="KW-0540">Nuclease</keyword>
<keyword id="KW-1185">Reference proteome</keyword>
<keyword id="KW-0690">Ribosome biogenesis</keyword>
<proteinExistence type="inferred from homology"/>
<reference key="1">
    <citation type="journal article" date="2004" name="Science">
        <title>Illuminating the evolutionary history of chlamydiae.</title>
        <authorList>
            <person name="Horn M."/>
            <person name="Collingro A."/>
            <person name="Schmitz-Esser S."/>
            <person name="Beier C.L."/>
            <person name="Purkhold U."/>
            <person name="Fartmann B."/>
            <person name="Brandt P."/>
            <person name="Nyakatura G.J."/>
            <person name="Droege M."/>
            <person name="Frishman D."/>
            <person name="Rattei T."/>
            <person name="Mewes H.-W."/>
            <person name="Wagner M."/>
        </authorList>
    </citation>
    <scope>NUCLEOTIDE SEQUENCE [LARGE SCALE GENOMIC DNA]</scope>
    <source>
        <strain>UWE25</strain>
    </source>
</reference>
<name>YQGF_PARUW</name>
<comment type="function">
    <text evidence="1">Could be a nuclease involved in processing of the 5'-end of pre-16S rRNA.</text>
</comment>
<comment type="subcellular location">
    <subcellularLocation>
        <location evidence="1">Cytoplasm</location>
    </subcellularLocation>
</comment>
<comment type="similarity">
    <text evidence="1">Belongs to the YqgF nuclease family.</text>
</comment>
<comment type="sequence caution" evidence="2">
    <conflict type="erroneous initiation">
        <sequence resource="EMBL-CDS" id="CAF23547"/>
    </conflict>
    <text>Truncated N-terminus.</text>
</comment>